<keyword id="KW-0012">Acyltransferase</keyword>
<keyword id="KW-0963">Cytoplasm</keyword>
<keyword id="KW-0275">Fatty acid biosynthesis</keyword>
<keyword id="KW-0276">Fatty acid metabolism</keyword>
<keyword id="KW-0444">Lipid biosynthesis</keyword>
<keyword id="KW-0443">Lipid metabolism</keyword>
<keyword id="KW-0511">Multifunctional enzyme</keyword>
<keyword id="KW-0808">Transferase</keyword>
<proteinExistence type="inferred from homology"/>
<gene>
    <name evidence="1" type="primary">fabH</name>
    <name type="ordered locus">CGSHiGG_03380</name>
</gene>
<protein>
    <recommendedName>
        <fullName evidence="1">Beta-ketoacyl-[acyl-carrier-protein] synthase III</fullName>
        <shortName evidence="1">Beta-ketoacyl-ACP synthase III</shortName>
        <shortName evidence="1">KAS III</shortName>
        <ecNumber evidence="1">2.3.1.180</ecNumber>
    </recommendedName>
    <alternativeName>
        <fullName evidence="1">3-oxoacyl-[acyl-carrier-protein] synthase 3</fullName>
    </alternativeName>
    <alternativeName>
        <fullName evidence="1">3-oxoacyl-[acyl-carrier-protein] synthase III</fullName>
    </alternativeName>
</protein>
<accession>A5UFW1</accession>
<reference key="1">
    <citation type="journal article" date="2007" name="Genome Biol.">
        <title>Characterization and modeling of the Haemophilus influenzae core and supragenomes based on the complete genomic sequences of Rd and 12 clinical nontypeable strains.</title>
        <authorList>
            <person name="Hogg J.S."/>
            <person name="Hu F.Z."/>
            <person name="Janto B."/>
            <person name="Boissy R."/>
            <person name="Hayes J."/>
            <person name="Keefe R."/>
            <person name="Post J.C."/>
            <person name="Ehrlich G.D."/>
        </authorList>
    </citation>
    <scope>NUCLEOTIDE SEQUENCE [LARGE SCALE GENOMIC DNA]</scope>
    <source>
        <strain>PittGG</strain>
    </source>
</reference>
<organism>
    <name type="scientific">Haemophilus influenzae (strain PittGG)</name>
    <dbReference type="NCBI Taxonomy" id="374931"/>
    <lineage>
        <taxon>Bacteria</taxon>
        <taxon>Pseudomonadati</taxon>
        <taxon>Pseudomonadota</taxon>
        <taxon>Gammaproteobacteria</taxon>
        <taxon>Pasteurellales</taxon>
        <taxon>Pasteurellaceae</taxon>
        <taxon>Haemophilus</taxon>
    </lineage>
</organism>
<sequence length="316" mass="34280">MNSRILSTGSYLPSHIRTNADLEKMVDTSDEWIVTRSGIRERRIAAEDETVATMGFEAAKNAIEAAQINPQDIELIIVATTSHSHAYPSAACQVQGLLNIDDAISFDLAAACTGFVYALSVADQFIRAGKVKKALVIGSDLNSRKLDETDRSTVVLFGDGAGAVILEASEQEGIISTHLHASADKNNALVLAQPERGIEKSGYIEMQGNETFKLAVRELSNVVEETLLANNLDKKDLDWLVPHQANLRIITATAKKLEMDMSQVVVTLDKYANNSAATVPVALDEAIRDGRIQRGQLLLLEAFGGGWTWGSALVRF</sequence>
<name>FABH_HAEIG</name>
<dbReference type="EC" id="2.3.1.180" evidence="1"/>
<dbReference type="EMBL" id="CP000672">
    <property type="protein sequence ID" value="ABQ99666.1"/>
    <property type="molecule type" value="Genomic_DNA"/>
</dbReference>
<dbReference type="SMR" id="A5UFW1"/>
<dbReference type="KEGG" id="hiq:CGSHiGG_03380"/>
<dbReference type="HOGENOM" id="CLU_039592_3_1_6"/>
<dbReference type="UniPathway" id="UPA00094"/>
<dbReference type="Proteomes" id="UP000001990">
    <property type="component" value="Chromosome"/>
</dbReference>
<dbReference type="GO" id="GO:0005737">
    <property type="term" value="C:cytoplasm"/>
    <property type="evidence" value="ECO:0007669"/>
    <property type="project" value="UniProtKB-SubCell"/>
</dbReference>
<dbReference type="GO" id="GO:0004315">
    <property type="term" value="F:3-oxoacyl-[acyl-carrier-protein] synthase activity"/>
    <property type="evidence" value="ECO:0007669"/>
    <property type="project" value="InterPro"/>
</dbReference>
<dbReference type="GO" id="GO:0033818">
    <property type="term" value="F:beta-ketoacyl-acyl-carrier-protein synthase III activity"/>
    <property type="evidence" value="ECO:0007669"/>
    <property type="project" value="UniProtKB-UniRule"/>
</dbReference>
<dbReference type="GO" id="GO:0006633">
    <property type="term" value="P:fatty acid biosynthetic process"/>
    <property type="evidence" value="ECO:0007669"/>
    <property type="project" value="UniProtKB-UniRule"/>
</dbReference>
<dbReference type="GO" id="GO:0044550">
    <property type="term" value="P:secondary metabolite biosynthetic process"/>
    <property type="evidence" value="ECO:0007669"/>
    <property type="project" value="TreeGrafter"/>
</dbReference>
<dbReference type="CDD" id="cd00830">
    <property type="entry name" value="KAS_III"/>
    <property type="match status" value="1"/>
</dbReference>
<dbReference type="FunFam" id="3.40.47.10:FF:000056">
    <property type="entry name" value="3-oxoacyl-[acyl-carrier-protein] synthase 3"/>
    <property type="match status" value="1"/>
</dbReference>
<dbReference type="FunFam" id="3.40.47.10:FF:000068">
    <property type="entry name" value="3-oxoacyl-[acyl-carrier-protein] synthase 3"/>
    <property type="match status" value="1"/>
</dbReference>
<dbReference type="Gene3D" id="3.40.47.10">
    <property type="match status" value="2"/>
</dbReference>
<dbReference type="HAMAP" id="MF_01815">
    <property type="entry name" value="FabH"/>
    <property type="match status" value="1"/>
</dbReference>
<dbReference type="InterPro" id="IPR013747">
    <property type="entry name" value="ACP_syn_III_C"/>
</dbReference>
<dbReference type="InterPro" id="IPR013751">
    <property type="entry name" value="ACP_syn_III_N"/>
</dbReference>
<dbReference type="InterPro" id="IPR004655">
    <property type="entry name" value="FabH"/>
</dbReference>
<dbReference type="InterPro" id="IPR016039">
    <property type="entry name" value="Thiolase-like"/>
</dbReference>
<dbReference type="NCBIfam" id="TIGR00747">
    <property type="entry name" value="fabH"/>
    <property type="match status" value="1"/>
</dbReference>
<dbReference type="NCBIfam" id="NF006829">
    <property type="entry name" value="PRK09352.1"/>
    <property type="match status" value="1"/>
</dbReference>
<dbReference type="PANTHER" id="PTHR34069">
    <property type="entry name" value="3-OXOACYL-[ACYL-CARRIER-PROTEIN] SYNTHASE 3"/>
    <property type="match status" value="1"/>
</dbReference>
<dbReference type="PANTHER" id="PTHR34069:SF2">
    <property type="entry name" value="BETA-KETOACYL-[ACYL-CARRIER-PROTEIN] SYNTHASE III"/>
    <property type="match status" value="1"/>
</dbReference>
<dbReference type="Pfam" id="PF08545">
    <property type="entry name" value="ACP_syn_III"/>
    <property type="match status" value="1"/>
</dbReference>
<dbReference type="Pfam" id="PF08541">
    <property type="entry name" value="ACP_syn_III_C"/>
    <property type="match status" value="1"/>
</dbReference>
<dbReference type="SUPFAM" id="SSF53901">
    <property type="entry name" value="Thiolase-like"/>
    <property type="match status" value="1"/>
</dbReference>
<evidence type="ECO:0000255" key="1">
    <source>
        <dbReference type="HAMAP-Rule" id="MF_01815"/>
    </source>
</evidence>
<feature type="chain" id="PRO_1000056364" description="Beta-ketoacyl-[acyl-carrier-protein] synthase III">
    <location>
        <begin position="1"/>
        <end position="316"/>
    </location>
</feature>
<feature type="region of interest" description="ACP-binding" evidence="1">
    <location>
        <begin position="244"/>
        <end position="248"/>
    </location>
</feature>
<feature type="active site" evidence="1">
    <location>
        <position position="112"/>
    </location>
</feature>
<feature type="active site" evidence="1">
    <location>
        <position position="243"/>
    </location>
</feature>
<feature type="active site" evidence="1">
    <location>
        <position position="273"/>
    </location>
</feature>
<comment type="function">
    <text evidence="1">Catalyzes the condensation reaction of fatty acid synthesis by the addition to an acyl acceptor of two carbons from malonyl-ACP. Catalyzes the first condensation reaction which initiates fatty acid synthesis and may therefore play a role in governing the total rate of fatty acid production. Possesses both acetoacetyl-ACP synthase and acetyl transacylase activities. Its substrate specificity determines the biosynthesis of branched-chain and/or straight-chain of fatty acids.</text>
</comment>
<comment type="catalytic activity">
    <reaction evidence="1">
        <text>malonyl-[ACP] + acetyl-CoA + H(+) = 3-oxobutanoyl-[ACP] + CO2 + CoA</text>
        <dbReference type="Rhea" id="RHEA:12080"/>
        <dbReference type="Rhea" id="RHEA-COMP:9623"/>
        <dbReference type="Rhea" id="RHEA-COMP:9625"/>
        <dbReference type="ChEBI" id="CHEBI:15378"/>
        <dbReference type="ChEBI" id="CHEBI:16526"/>
        <dbReference type="ChEBI" id="CHEBI:57287"/>
        <dbReference type="ChEBI" id="CHEBI:57288"/>
        <dbReference type="ChEBI" id="CHEBI:78449"/>
        <dbReference type="ChEBI" id="CHEBI:78450"/>
        <dbReference type="EC" id="2.3.1.180"/>
    </reaction>
</comment>
<comment type="pathway">
    <text evidence="1">Lipid metabolism; fatty acid biosynthesis.</text>
</comment>
<comment type="subunit">
    <text evidence="1">Homodimer.</text>
</comment>
<comment type="subcellular location">
    <subcellularLocation>
        <location evidence="1">Cytoplasm</location>
    </subcellularLocation>
</comment>
<comment type="domain">
    <text evidence="1">The last Arg residue of the ACP-binding site is essential for the weak association between ACP/AcpP and FabH.</text>
</comment>
<comment type="similarity">
    <text evidence="1">Belongs to the thiolase-like superfamily. FabH family.</text>
</comment>